<reference key="1">
    <citation type="journal article" date="2009" name="PLoS Genet.">
        <title>Organised genome dynamics in the Escherichia coli species results in highly diverse adaptive paths.</title>
        <authorList>
            <person name="Touchon M."/>
            <person name="Hoede C."/>
            <person name="Tenaillon O."/>
            <person name="Barbe V."/>
            <person name="Baeriswyl S."/>
            <person name="Bidet P."/>
            <person name="Bingen E."/>
            <person name="Bonacorsi S."/>
            <person name="Bouchier C."/>
            <person name="Bouvet O."/>
            <person name="Calteau A."/>
            <person name="Chiapello H."/>
            <person name="Clermont O."/>
            <person name="Cruveiller S."/>
            <person name="Danchin A."/>
            <person name="Diard M."/>
            <person name="Dossat C."/>
            <person name="Karoui M.E."/>
            <person name="Frapy E."/>
            <person name="Garry L."/>
            <person name="Ghigo J.M."/>
            <person name="Gilles A.M."/>
            <person name="Johnson J."/>
            <person name="Le Bouguenec C."/>
            <person name="Lescat M."/>
            <person name="Mangenot S."/>
            <person name="Martinez-Jehanne V."/>
            <person name="Matic I."/>
            <person name="Nassif X."/>
            <person name="Oztas S."/>
            <person name="Petit M.A."/>
            <person name="Pichon C."/>
            <person name="Rouy Z."/>
            <person name="Ruf C.S."/>
            <person name="Schneider D."/>
            <person name="Tourret J."/>
            <person name="Vacherie B."/>
            <person name="Vallenet D."/>
            <person name="Medigue C."/>
            <person name="Rocha E.P.C."/>
            <person name="Denamur E."/>
        </authorList>
    </citation>
    <scope>NUCLEOTIDE SEQUENCE [LARGE SCALE GENOMIC DNA]</scope>
    <source>
        <strain>ED1a</strain>
    </source>
</reference>
<comment type="function">
    <text evidence="1">Regulates arginine biosynthesis genes.</text>
</comment>
<comment type="pathway">
    <text>Amino-acid biosynthesis; L-arginine biosynthesis [regulation].</text>
</comment>
<comment type="subcellular location">
    <subcellularLocation>
        <location evidence="1">Cytoplasm</location>
    </subcellularLocation>
</comment>
<comment type="similarity">
    <text evidence="1">Belongs to the ArgR family.</text>
</comment>
<organism>
    <name type="scientific">Escherichia coli O81 (strain ED1a)</name>
    <dbReference type="NCBI Taxonomy" id="585397"/>
    <lineage>
        <taxon>Bacteria</taxon>
        <taxon>Pseudomonadati</taxon>
        <taxon>Pseudomonadota</taxon>
        <taxon>Gammaproteobacteria</taxon>
        <taxon>Enterobacterales</taxon>
        <taxon>Enterobacteriaceae</taxon>
        <taxon>Escherichia</taxon>
    </lineage>
</organism>
<evidence type="ECO:0000255" key="1">
    <source>
        <dbReference type="HAMAP-Rule" id="MF_00173"/>
    </source>
</evidence>
<dbReference type="EMBL" id="CU928162">
    <property type="protein sequence ID" value="CAR10027.2"/>
    <property type="molecule type" value="Genomic_DNA"/>
</dbReference>
<dbReference type="RefSeq" id="WP_001257847.1">
    <property type="nucleotide sequence ID" value="NC_011745.1"/>
</dbReference>
<dbReference type="SMR" id="B7N109"/>
<dbReference type="KEGG" id="ecq:ECED1_3887"/>
<dbReference type="HOGENOM" id="CLU_097103_2_0_6"/>
<dbReference type="UniPathway" id="UPA00068"/>
<dbReference type="Proteomes" id="UP000000748">
    <property type="component" value="Chromosome"/>
</dbReference>
<dbReference type="GO" id="GO:0005737">
    <property type="term" value="C:cytoplasm"/>
    <property type="evidence" value="ECO:0007669"/>
    <property type="project" value="UniProtKB-SubCell"/>
</dbReference>
<dbReference type="GO" id="GO:0034618">
    <property type="term" value="F:arginine binding"/>
    <property type="evidence" value="ECO:0007669"/>
    <property type="project" value="InterPro"/>
</dbReference>
<dbReference type="GO" id="GO:0003677">
    <property type="term" value="F:DNA binding"/>
    <property type="evidence" value="ECO:0007669"/>
    <property type="project" value="UniProtKB-KW"/>
</dbReference>
<dbReference type="GO" id="GO:0003700">
    <property type="term" value="F:DNA-binding transcription factor activity"/>
    <property type="evidence" value="ECO:0007669"/>
    <property type="project" value="UniProtKB-UniRule"/>
</dbReference>
<dbReference type="GO" id="GO:0006526">
    <property type="term" value="P:L-arginine biosynthetic process"/>
    <property type="evidence" value="ECO:0007669"/>
    <property type="project" value="UniProtKB-UniPathway"/>
</dbReference>
<dbReference type="GO" id="GO:0051259">
    <property type="term" value="P:protein complex oligomerization"/>
    <property type="evidence" value="ECO:0007669"/>
    <property type="project" value="InterPro"/>
</dbReference>
<dbReference type="GO" id="GO:1900079">
    <property type="term" value="P:regulation of arginine biosynthetic process"/>
    <property type="evidence" value="ECO:0007669"/>
    <property type="project" value="UniProtKB-UniRule"/>
</dbReference>
<dbReference type="FunFam" id="1.10.10.10:FF:000074">
    <property type="entry name" value="Arginine repressor"/>
    <property type="match status" value="1"/>
</dbReference>
<dbReference type="FunFam" id="3.30.1360.40:FF:000004">
    <property type="entry name" value="Arginine repressor"/>
    <property type="match status" value="1"/>
</dbReference>
<dbReference type="Gene3D" id="3.30.1360.40">
    <property type="match status" value="1"/>
</dbReference>
<dbReference type="Gene3D" id="1.10.10.10">
    <property type="entry name" value="Winged helix-like DNA-binding domain superfamily/Winged helix DNA-binding domain"/>
    <property type="match status" value="1"/>
</dbReference>
<dbReference type="HAMAP" id="MF_00173">
    <property type="entry name" value="Arg_repressor"/>
    <property type="match status" value="1"/>
</dbReference>
<dbReference type="InterPro" id="IPR001669">
    <property type="entry name" value="Arg_repress"/>
</dbReference>
<dbReference type="InterPro" id="IPR020899">
    <property type="entry name" value="Arg_repress_C"/>
</dbReference>
<dbReference type="InterPro" id="IPR036251">
    <property type="entry name" value="Arg_repress_C_sf"/>
</dbReference>
<dbReference type="InterPro" id="IPR020900">
    <property type="entry name" value="Arg_repress_DNA-bd"/>
</dbReference>
<dbReference type="InterPro" id="IPR036388">
    <property type="entry name" value="WH-like_DNA-bd_sf"/>
</dbReference>
<dbReference type="InterPro" id="IPR036390">
    <property type="entry name" value="WH_DNA-bd_sf"/>
</dbReference>
<dbReference type="NCBIfam" id="TIGR01529">
    <property type="entry name" value="argR_whole"/>
    <property type="match status" value="1"/>
</dbReference>
<dbReference type="NCBIfam" id="NF003457">
    <property type="entry name" value="PRK05066.1"/>
    <property type="match status" value="1"/>
</dbReference>
<dbReference type="PANTHER" id="PTHR34471">
    <property type="entry name" value="ARGININE REPRESSOR"/>
    <property type="match status" value="1"/>
</dbReference>
<dbReference type="PANTHER" id="PTHR34471:SF1">
    <property type="entry name" value="ARGININE REPRESSOR"/>
    <property type="match status" value="1"/>
</dbReference>
<dbReference type="Pfam" id="PF01316">
    <property type="entry name" value="Arg_repressor"/>
    <property type="match status" value="1"/>
</dbReference>
<dbReference type="Pfam" id="PF02863">
    <property type="entry name" value="Arg_repressor_C"/>
    <property type="match status" value="1"/>
</dbReference>
<dbReference type="PRINTS" id="PR01467">
    <property type="entry name" value="ARGREPRESSOR"/>
</dbReference>
<dbReference type="SUPFAM" id="SSF55252">
    <property type="entry name" value="C-terminal domain of arginine repressor"/>
    <property type="match status" value="1"/>
</dbReference>
<dbReference type="SUPFAM" id="SSF46785">
    <property type="entry name" value="Winged helix' DNA-binding domain"/>
    <property type="match status" value="1"/>
</dbReference>
<feature type="chain" id="PRO_1000123796" description="Arginine repressor">
    <location>
        <begin position="1"/>
        <end position="156"/>
    </location>
</feature>
<accession>B7N109</accession>
<keyword id="KW-0028">Amino-acid biosynthesis</keyword>
<keyword id="KW-0055">Arginine biosynthesis</keyword>
<keyword id="KW-0963">Cytoplasm</keyword>
<keyword id="KW-0238">DNA-binding</keyword>
<keyword id="KW-0678">Repressor</keyword>
<keyword id="KW-0804">Transcription</keyword>
<keyword id="KW-0805">Transcription regulation</keyword>
<gene>
    <name evidence="1" type="primary">argR</name>
    <name type="ordered locus">ECED1_3887</name>
</gene>
<protein>
    <recommendedName>
        <fullName evidence="1">Arginine repressor</fullName>
    </recommendedName>
</protein>
<proteinExistence type="inferred from homology"/>
<sequence length="156" mass="17009">MRSSAKQEELVKAFKALLKEEKFSSQGEIVAALQEQGFDNINQSKVSRMLTKFGAVRTRNAKMEMVYCLPAELGVPTTSSPLKNLVLDIDYNDAVVVIHTSPGAAQLIARLLDSLGKAEGILGTIAGDDTIFTTPANGFTVKELYEAILELFDQEL</sequence>
<name>ARGR_ECO81</name>